<gene>
    <name evidence="5" type="primary">Tmem262</name>
    <name evidence="3" type="synonym">Catsperh</name>
</gene>
<accession>D3Z338</accession>
<feature type="chain" id="PRO_0000454936" description="Cation channel sperm-associated auxiliary subunit TMEM262">
    <location>
        <begin position="1"/>
        <end position="116"/>
    </location>
</feature>
<feature type="topological domain" description="Cytoplasmic" evidence="2">
    <location>
        <begin position="1"/>
        <end position="16"/>
    </location>
</feature>
<feature type="transmembrane region" description="Helical" evidence="2">
    <location>
        <begin position="17"/>
        <end position="38"/>
    </location>
</feature>
<feature type="topological domain" description="Extracellular" evidence="2">
    <location>
        <begin position="39"/>
        <end position="51"/>
    </location>
</feature>
<feature type="transmembrane region" description="Helical" evidence="2">
    <location>
        <begin position="52"/>
        <end position="72"/>
    </location>
</feature>
<feature type="topological domain" description="Cytoplasmic" evidence="2">
    <location>
        <begin position="73"/>
        <end position="84"/>
    </location>
</feature>
<feature type="transmembrane region" description="Helical" evidence="2">
    <location>
        <begin position="85"/>
        <end position="107"/>
    </location>
</feature>
<feature type="topological domain" description="Extracellular" evidence="2">
    <location>
        <begin position="108"/>
        <end position="116"/>
    </location>
</feature>
<feature type="helix" evidence="7">
    <location>
        <begin position="2"/>
        <end position="9"/>
    </location>
</feature>
<feature type="helix" evidence="7">
    <location>
        <begin position="14"/>
        <end position="41"/>
    </location>
</feature>
<feature type="strand" evidence="7">
    <location>
        <begin position="46"/>
        <end position="53"/>
    </location>
</feature>
<feature type="helix" evidence="7">
    <location>
        <begin position="54"/>
        <end position="78"/>
    </location>
</feature>
<feature type="helix" evidence="7">
    <location>
        <begin position="81"/>
        <end position="101"/>
    </location>
</feature>
<feature type="helix" evidence="7">
    <location>
        <begin position="103"/>
        <end position="107"/>
    </location>
</feature>
<feature type="turn" evidence="7">
    <location>
        <begin position="108"/>
        <end position="111"/>
    </location>
</feature>
<sequence>MRWRDRIAVLCFPPGLMLTVAALILFFIHMGVFASDVHNFCVIHNYDHMSFRYTVVLIFSQVISIGWAAMGSLYAEMTGDKFLRCFALTILILNGAMFFNRLCLEFLAINYREERH</sequence>
<organism evidence="6">
    <name type="scientific">Mus musculus</name>
    <name type="common">Mouse</name>
    <dbReference type="NCBI Taxonomy" id="10090"/>
    <lineage>
        <taxon>Eukaryota</taxon>
        <taxon>Metazoa</taxon>
        <taxon>Chordata</taxon>
        <taxon>Craniata</taxon>
        <taxon>Vertebrata</taxon>
        <taxon>Euteleostomi</taxon>
        <taxon>Mammalia</taxon>
        <taxon>Eutheria</taxon>
        <taxon>Euarchontoglires</taxon>
        <taxon>Glires</taxon>
        <taxon>Rodentia</taxon>
        <taxon>Myomorpha</taxon>
        <taxon>Muroidea</taxon>
        <taxon>Muridae</taxon>
        <taxon>Murinae</taxon>
        <taxon>Mus</taxon>
        <taxon>Mus</taxon>
    </lineage>
</organism>
<comment type="function">
    <text evidence="2">Auxiliary component of the CatSper complex, a complex involved in sperm cell hyperactivation.</text>
</comment>
<comment type="subunit">
    <text evidence="1 2 4">Component of the CatSper complex or CatSpermasome composed of the core pore-forming members CATSPER1, CATSPER2, CATSPER3 and CATSPER4 as well as auxiliary members CATSPERB, CATSPERG, CATSPERD, CATSPERE, CATSPERZ, C2CD6/CATSPERT, SLCO6C1, TMEM249, TMEM262 and EFCAB9 (PubMed:34225353). HSPA1 may be an additional auxiliary complex member (By similarity). The core complex members CATSPER1, CATSPER2, CATSPER3 and CATSPER4 form a heterotetrameric channel (PubMed:34225353). The auxiliary CATSPERB, CATSPERG2, CATSPERD and CATSPERE subunits form a pavilion-like structure over the pore which stabilizes the complex through interactions with CATSPER4, CATSPER3, CATSPER1 and CATSPER2 respectively (PubMed:34225353). SLCO6C1 interacts with CATSPERE and TMEM262/CATSPERH interacts with CATSPERB, further stabilizing the complex (PubMed:34225353). C2CD6/CATSPERT interacts at least with CATSPERD and is required for targeting the CatSper complex in the flagellar membrane (Probable).</text>
</comment>
<comment type="subcellular location">
    <subcellularLocation>
        <location evidence="4">Cell projection</location>
        <location evidence="4">Cilium</location>
        <location evidence="4">Flagellum membrane</location>
        <topology evidence="2">Multi-pass membrane protein</topology>
    </subcellularLocation>
</comment>
<reference evidence="6" key="1">
    <citation type="journal article" date="2009" name="PLoS Biol.">
        <title>Lineage-specific biology revealed by a finished genome assembly of the mouse.</title>
        <authorList>
            <person name="Church D.M."/>
            <person name="Goodstadt L."/>
            <person name="Hillier L.W."/>
            <person name="Zody M.C."/>
            <person name="Goldstein S."/>
            <person name="She X."/>
            <person name="Bult C.J."/>
            <person name="Agarwala R."/>
            <person name="Cherry J.L."/>
            <person name="DiCuccio M."/>
            <person name="Hlavina W."/>
            <person name="Kapustin Y."/>
            <person name="Meric P."/>
            <person name="Maglott D."/>
            <person name="Birtle Z."/>
            <person name="Marques A.C."/>
            <person name="Graves T."/>
            <person name="Zhou S."/>
            <person name="Teague B."/>
            <person name="Potamousis K."/>
            <person name="Churas C."/>
            <person name="Place M."/>
            <person name="Herschleb J."/>
            <person name="Runnheim R."/>
            <person name="Forrest D."/>
            <person name="Amos-Landgraf J."/>
            <person name="Schwartz D.C."/>
            <person name="Cheng Z."/>
            <person name="Lindblad-Toh K."/>
            <person name="Eichler E.E."/>
            <person name="Ponting C.P."/>
        </authorList>
    </citation>
    <scope>NUCLEOTIDE SEQUENCE [LARGE SCALE GENOMIC DNA]</scope>
    <source>
        <strain evidence="6">C57BL/6J</strain>
    </source>
</reference>
<reference evidence="4" key="2">
    <citation type="journal article" date="2021" name="Nature">
        <title>Structure of a mammalian sperm cation channel complex.</title>
        <authorList>
            <person name="Lin S."/>
            <person name="Ke M."/>
            <person name="Zhang Y."/>
            <person name="Yan Z."/>
            <person name="Wu J."/>
        </authorList>
    </citation>
    <scope>STRUCTURE BY ELECTRON MICROSCOPY (2.9 ANGSTROMS) OF THE CATSPER COMPLEX</scope>
    <scope>IDENTIFICATION BY MASS SPECTROMETRY</scope>
    <scope>FUNCTION</scope>
    <scope>TRANSMEMBRANE DOMAINS</scope>
    <scope>TOPOLOGY</scope>
</reference>
<proteinExistence type="evidence at protein level"/>
<keyword id="KW-0002">3D-structure</keyword>
<keyword id="KW-1003">Cell membrane</keyword>
<keyword id="KW-0966">Cell projection</keyword>
<keyword id="KW-0969">Cilium</keyword>
<keyword id="KW-0282">Flagellum</keyword>
<keyword id="KW-0472">Membrane</keyword>
<keyword id="KW-1185">Reference proteome</keyword>
<keyword id="KW-0812">Transmembrane</keyword>
<keyword id="KW-1133">Transmembrane helix</keyword>
<dbReference type="CCDS" id="CCDS50363.1"/>
<dbReference type="RefSeq" id="NP_001104787.1">
    <property type="nucleotide sequence ID" value="NM_001111317.2"/>
</dbReference>
<dbReference type="PDB" id="7EEB">
    <property type="method" value="EM"/>
    <property type="resolution" value="2.90 A"/>
    <property type="chains" value="M=1-116"/>
</dbReference>
<dbReference type="PDBsum" id="7EEB"/>
<dbReference type="EMDB" id="EMD-31076"/>
<dbReference type="SMR" id="D3Z338"/>
<dbReference type="ComplexPortal" id="CPX-9078">
    <property type="entry name" value="CatSpermasome complex, gamma subunit variant 2"/>
</dbReference>
<dbReference type="FunCoup" id="D3Z338">
    <property type="interactions" value="15"/>
</dbReference>
<dbReference type="STRING" id="10090.ENSMUSP00000121339"/>
<dbReference type="PaxDb" id="10090-ENSMUSP00000121339"/>
<dbReference type="ProteomicsDB" id="335333"/>
<dbReference type="Ensembl" id="ENSMUST00000143303.2">
    <property type="protein sequence ID" value="ENSMUSP00000121339.2"/>
    <property type="gene ID" value="ENSMUSG00000047733.11"/>
</dbReference>
<dbReference type="GeneID" id="433215"/>
<dbReference type="KEGG" id="mmu:433215"/>
<dbReference type="UCSC" id="uc008ghe.2">
    <property type="organism name" value="mouse"/>
</dbReference>
<dbReference type="AGR" id="MGI:3690536"/>
<dbReference type="CTD" id="100130348"/>
<dbReference type="MGI" id="MGI:3690536">
    <property type="gene designation" value="Tmem262"/>
</dbReference>
<dbReference type="VEuPathDB" id="HostDB:ENSMUSG00000047733"/>
<dbReference type="eggNOG" id="ENOG502S7IB">
    <property type="taxonomic scope" value="Eukaryota"/>
</dbReference>
<dbReference type="GeneTree" id="ENSGT00530000064783"/>
<dbReference type="HOGENOM" id="CLU_160801_0_0_1"/>
<dbReference type="InParanoid" id="D3Z338"/>
<dbReference type="OMA" id="QYREENH"/>
<dbReference type="OrthoDB" id="9406895at2759"/>
<dbReference type="BioGRID-ORCS" id="433215">
    <property type="hits" value="0 hits in 76 CRISPR screens"/>
</dbReference>
<dbReference type="ChiTaRS" id="Tmem262">
    <property type="organism name" value="mouse"/>
</dbReference>
<dbReference type="PRO" id="PR:D3Z338"/>
<dbReference type="Proteomes" id="UP000000589">
    <property type="component" value="Chromosome 19"/>
</dbReference>
<dbReference type="RNAct" id="D3Z338">
    <property type="molecule type" value="protein"/>
</dbReference>
<dbReference type="Bgee" id="ENSMUSG00000047733">
    <property type="expression patterns" value="Expressed in testis and 44 other cell types or tissues"/>
</dbReference>
<dbReference type="ExpressionAtlas" id="D3Z338">
    <property type="expression patterns" value="baseline and differential"/>
</dbReference>
<dbReference type="GO" id="GO:0036128">
    <property type="term" value="C:CatSper complex"/>
    <property type="evidence" value="ECO:0000314"/>
    <property type="project" value="UniProtKB"/>
</dbReference>
<dbReference type="GO" id="GO:0031514">
    <property type="term" value="C:motile cilium"/>
    <property type="evidence" value="ECO:0007669"/>
    <property type="project" value="UniProtKB-KW"/>
</dbReference>
<dbReference type="InterPro" id="IPR040431">
    <property type="entry name" value="TM262"/>
</dbReference>
<dbReference type="PANTHER" id="PTHR37998:SF1">
    <property type="entry name" value="CATION CHANNEL SPERM-ASSOCIATED AUXILIARY SUBUNIT TMEM262"/>
    <property type="match status" value="1"/>
</dbReference>
<dbReference type="PANTHER" id="PTHR37998">
    <property type="entry name" value="TRANSMEMBRANE PROTEIN 262"/>
    <property type="match status" value="1"/>
</dbReference>
<name>TM262_MOUSE</name>
<evidence type="ECO:0000250" key="1">
    <source>
        <dbReference type="UniProtKB" id="Q91ZR5"/>
    </source>
</evidence>
<evidence type="ECO:0000269" key="2">
    <source>
    </source>
</evidence>
<evidence type="ECO:0000303" key="3">
    <source>
    </source>
</evidence>
<evidence type="ECO:0000305" key="4"/>
<evidence type="ECO:0000312" key="5">
    <source>
        <dbReference type="MGI" id="MGI:3690536"/>
    </source>
</evidence>
<evidence type="ECO:0000312" key="6">
    <source>
        <dbReference type="Proteomes" id="UP000000589"/>
    </source>
</evidence>
<evidence type="ECO:0007829" key="7">
    <source>
        <dbReference type="PDB" id="7EEB"/>
    </source>
</evidence>
<protein>
    <recommendedName>
        <fullName evidence="4">Cation channel sperm-associated auxiliary subunit TMEM262</fullName>
    </recommendedName>
    <alternativeName>
        <fullName evidence="3">Cation channel sperm-associated auxiliary subunit eta</fullName>
    </alternativeName>
    <alternativeName>
        <fullName evidence="5">Transmembrane protein 262</fullName>
    </alternativeName>
</protein>